<keyword id="KW-1003">Cell membrane</keyword>
<keyword id="KW-1015">Disulfide bond</keyword>
<keyword id="KW-0325">Glycoprotein</keyword>
<keyword id="KW-0378">Hydrolase</keyword>
<keyword id="KW-0472">Membrane</keyword>
<keyword id="KW-0645">Protease</keyword>
<keyword id="KW-1267">Proteomics identification</keyword>
<keyword id="KW-1185">Reference proteome</keyword>
<keyword id="KW-0677">Repeat</keyword>
<keyword id="KW-0720">Serine protease</keyword>
<keyword id="KW-0735">Signal-anchor</keyword>
<keyword id="KW-0812">Transmembrane</keyword>
<keyword id="KW-1133">Transmembrane helix</keyword>
<accession>Q7Z410</accession>
<accession>Q6ZND6</accession>
<accession>Q7Z411</accession>
<name>TMPS9_HUMAN</name>
<protein>
    <recommendedName>
        <fullName>Transmembrane protease serine 9</fullName>
        <ecNumber>3.4.21.-</ecNumber>
    </recommendedName>
    <alternativeName>
        <fullName>Polyserase-I</fullName>
    </alternativeName>
    <alternativeName>
        <fullName>Polyserine protease 1</fullName>
        <shortName>Polyserase-1</shortName>
    </alternativeName>
    <component>
        <recommendedName>
            <fullName>Serase-1</fullName>
        </recommendedName>
    </component>
    <component>
        <recommendedName>
            <fullName>Serase-2</fullName>
        </recommendedName>
    </component>
    <component>
        <recommendedName>
            <fullName>Serase-3</fullName>
        </recommendedName>
    </component>
</protein>
<sequence>MEPTVADVHLVPRTTKEVPALDAACCRAASIGVVATSLVVLTLGVLLAFLSTQGFHVDHTAELRGIRWTSSLRRETSDYHRTLTPTLEALLHFLLRPLQTLSLGLEEELLQRGIRARLREHGISLAAYGTIVSAELTGRHKGPLAERDFKSGRCPGNSFSCGNSQCVTKVNPECDDQEDCSDGSDEAHCECGLQPAWRMAGRIVGGMEASPGEFPWQASLRENKEHFCGAAIINARWLVSAAHCFNEFQDPTKWVAYVGATYLSGSEASTVRAQVVQIVKHPLYNADTADFDVAVLELTSPLPFGRHIQPVCLPAATHIFPPSKKCLISGWGYLKEDFLVKPEVLQKATVELLDQALCASLYGHSLTDRMVCAGYLDGKVDSCQGDSGGPLVCEEPSGRFFLAGIVSWGIGCAEARRPGVYARVTRLRDWILEATTKASMPLAPTMAPAPAAPSTAWPTSPESPVVSTPTKSMQALSTVPLDWVTVPKLQECGARPAMEKPTRVVGGFGAASGEVPWQVSLKEGSRHFCGATVVGDRWLLSAAHCFNHTKVEQVRAHLGTASLLGLGGSPVKIGLRRVVLHPLYNPGILDFDLAVLELASPLAFNKYIQPVCLPLAIQKFPVGRKCMISGWGNTQEGNATKPELLQKASVGIIDQKTCSVLYNFSLTDRMICAGFLEGKVDSCQGDSGGPLACEEAPGVFYLAGIVSWGIGCAQVKKPGVYTRITRLKGWILEIMSSQPLPMSPPSTTRMLATTSPRTTAGLTVPGATPSRPTPGAASRVTGQPANSTLSAVSTTARGQTPFPDAPEATTHTQLPDCGLAPAALTRIVGGSAAGRGEWPWQVSLWLRRREHRCGAVLVAERWLLSAAHCFDVYGDPKQWAAFLGTPFLSGAEGQLERVARIYKHPFYNLYTLDYDVALLELAGPVRRSRLVRPICLPEPAPRPPDGTRCVITGWGSVREGGSMARQLQKAAVRLLSEQTCRRFYPVQISSRMLCAGFPQGGVDSCSGDAGGPLACREPSGRWVLTGVTSWGYGCGRPHFPGVYTRVAAVRGWIGQHIQE</sequence>
<evidence type="ECO:0000250" key="1"/>
<evidence type="ECO:0000255" key="2"/>
<evidence type="ECO:0000255" key="3">
    <source>
        <dbReference type="PROSITE-ProRule" id="PRU00124"/>
    </source>
</evidence>
<evidence type="ECO:0000255" key="4">
    <source>
        <dbReference type="PROSITE-ProRule" id="PRU00274"/>
    </source>
</evidence>
<evidence type="ECO:0000256" key="5">
    <source>
        <dbReference type="SAM" id="MobiDB-lite"/>
    </source>
</evidence>
<evidence type="ECO:0000269" key="6">
    <source>
    </source>
</evidence>
<evidence type="ECO:0000269" key="7">
    <source>
    </source>
</evidence>
<evidence type="ECO:0000305" key="8"/>
<comment type="function">
    <text>Serase-1 and serase-2 are serine proteases that hydrolyze the peptides N-t-Boc-Gln-Ala-Arg-AMC and N-t-Boc-Gln-Gly-Arg-AMC. In contrast, N-t-Boc-Ala-Phe-Lys-AMC and N-t-Boc-Ala-Pro-Ala-AMC are not significantly hydrolyzed.</text>
</comment>
<comment type="activity regulation">
    <text evidence="6">Inhibited by serine protease inhibitors PMSF and 4-(2-aminoethyl)benzenesulfonyl fluoride, but not by EDTA.</text>
</comment>
<comment type="subcellular location">
    <subcellularLocation>
        <location evidence="6">Cell membrane</location>
        <topology evidence="6">Single-pass type II membrane protein</topology>
    </subcellularLocation>
</comment>
<comment type="tissue specificity">
    <text evidence="6">Expressed in fetal human tissues, such as kidney, liver, lung and brain, and in a variety of tumor cell lines. Weakly expressed in adult tissues including skeletal muscle, liver, placenta and heart.</text>
</comment>
<comment type="domain">
    <text>The serine protease 1 and 2 domains are catalytically active, whereas the serine protease 3 domain lacks the essential Ser residue of the catalytic triad at position 1009 and is predicted to be inactive.</text>
</comment>
<comment type="PTM">
    <text evidence="6">Proteolytically cleaved to generate 3 independent serine protease chains. The cleaved chains may remain attached to the membrane thanks to disulfide bonds. It is unclear whether cleavage always takes place.</text>
</comment>
<comment type="similarity">
    <text evidence="4">Belongs to the peptidase S1 family.</text>
</comment>
<comment type="sequence caution" evidence="8">
    <conflict type="frameshift">
        <sequence resource="EMBL-CDS" id="BAD18439"/>
    </conflict>
</comment>
<comment type="sequence caution" evidence="8">
    <conflict type="miscellaneous discrepancy">
        <sequence resource="EMBL-CDS" id="CAD35759"/>
    </conflict>
    <text>Aberrant splicing.</text>
</comment>
<organism>
    <name type="scientific">Homo sapiens</name>
    <name type="common">Human</name>
    <dbReference type="NCBI Taxonomy" id="9606"/>
    <lineage>
        <taxon>Eukaryota</taxon>
        <taxon>Metazoa</taxon>
        <taxon>Chordata</taxon>
        <taxon>Craniata</taxon>
        <taxon>Vertebrata</taxon>
        <taxon>Euteleostomi</taxon>
        <taxon>Mammalia</taxon>
        <taxon>Eutheria</taxon>
        <taxon>Euarchontoglires</taxon>
        <taxon>Primates</taxon>
        <taxon>Haplorrhini</taxon>
        <taxon>Catarrhini</taxon>
        <taxon>Hominidae</taxon>
        <taxon>Homo</taxon>
    </lineage>
</organism>
<reference key="1">
    <citation type="journal article" date="2003" name="Proc. Natl. Acad. Sci. U.S.A.">
        <title>Polyserase-I, a human polyprotease with the ability to generate independent serine protease domains from a single translation product.</title>
        <authorList>
            <person name="Cal S."/>
            <person name="Quesada V."/>
            <person name="Garabaya C."/>
            <person name="Lopez-Otin C."/>
        </authorList>
    </citation>
    <scope>NUCLEOTIDE SEQUENCE [MRNA]</scope>
    <scope>ENZYME ACTIVITY</scope>
    <scope>ACTIVITY REGULATION</scope>
    <scope>CLEAVAGE</scope>
    <scope>SUBCELLULAR LOCATION</scope>
    <scope>TISSUE SPECIFICITY</scope>
    <source>
        <tissue>Liver</tissue>
    </source>
</reference>
<reference key="2">
    <citation type="journal article" date="2004" name="Nature">
        <title>The DNA sequence and biology of human chromosome 19.</title>
        <authorList>
            <person name="Grimwood J."/>
            <person name="Gordon L.A."/>
            <person name="Olsen A.S."/>
            <person name="Terry A."/>
            <person name="Schmutz J."/>
            <person name="Lamerdin J.E."/>
            <person name="Hellsten U."/>
            <person name="Goodstein D."/>
            <person name="Couronne O."/>
            <person name="Tran-Gyamfi M."/>
            <person name="Aerts A."/>
            <person name="Altherr M."/>
            <person name="Ashworth L."/>
            <person name="Bajorek E."/>
            <person name="Black S."/>
            <person name="Branscomb E."/>
            <person name="Caenepeel S."/>
            <person name="Carrano A.V."/>
            <person name="Caoile C."/>
            <person name="Chan Y.M."/>
            <person name="Christensen M."/>
            <person name="Cleland C.A."/>
            <person name="Copeland A."/>
            <person name="Dalin E."/>
            <person name="Dehal P."/>
            <person name="Denys M."/>
            <person name="Detter J.C."/>
            <person name="Escobar J."/>
            <person name="Flowers D."/>
            <person name="Fotopulos D."/>
            <person name="Garcia C."/>
            <person name="Georgescu A.M."/>
            <person name="Glavina T."/>
            <person name="Gomez M."/>
            <person name="Gonzales E."/>
            <person name="Groza M."/>
            <person name="Hammon N."/>
            <person name="Hawkins T."/>
            <person name="Haydu L."/>
            <person name="Ho I."/>
            <person name="Huang W."/>
            <person name="Israni S."/>
            <person name="Jett J."/>
            <person name="Kadner K."/>
            <person name="Kimball H."/>
            <person name="Kobayashi A."/>
            <person name="Larionov V."/>
            <person name="Leem S.-H."/>
            <person name="Lopez F."/>
            <person name="Lou Y."/>
            <person name="Lowry S."/>
            <person name="Malfatti S."/>
            <person name="Martinez D."/>
            <person name="McCready P.M."/>
            <person name="Medina C."/>
            <person name="Morgan J."/>
            <person name="Nelson K."/>
            <person name="Nolan M."/>
            <person name="Ovcharenko I."/>
            <person name="Pitluck S."/>
            <person name="Pollard M."/>
            <person name="Popkie A.P."/>
            <person name="Predki P."/>
            <person name="Quan G."/>
            <person name="Ramirez L."/>
            <person name="Rash S."/>
            <person name="Retterer J."/>
            <person name="Rodriguez A."/>
            <person name="Rogers S."/>
            <person name="Salamov A."/>
            <person name="Salazar A."/>
            <person name="She X."/>
            <person name="Smith D."/>
            <person name="Slezak T."/>
            <person name="Solovyev V."/>
            <person name="Thayer N."/>
            <person name="Tice H."/>
            <person name="Tsai M."/>
            <person name="Ustaszewska A."/>
            <person name="Vo N."/>
            <person name="Wagner M."/>
            <person name="Wheeler J."/>
            <person name="Wu K."/>
            <person name="Xie G."/>
            <person name="Yang J."/>
            <person name="Dubchak I."/>
            <person name="Furey T.S."/>
            <person name="DeJong P."/>
            <person name="Dickson M."/>
            <person name="Gordon D."/>
            <person name="Eichler E.E."/>
            <person name="Pennacchio L.A."/>
            <person name="Richardson P."/>
            <person name="Stubbs L."/>
            <person name="Rokhsar D.S."/>
            <person name="Myers R.M."/>
            <person name="Rubin E.M."/>
            <person name="Lucas S.M."/>
        </authorList>
    </citation>
    <scope>NUCLEOTIDE SEQUENCE [LARGE SCALE GENOMIC DNA]</scope>
</reference>
<reference key="3">
    <citation type="journal article" date="2004" name="Nat. Genet.">
        <title>Complete sequencing and characterization of 21,243 full-length human cDNAs.</title>
        <authorList>
            <person name="Ota T."/>
            <person name="Suzuki Y."/>
            <person name="Nishikawa T."/>
            <person name="Otsuki T."/>
            <person name="Sugiyama T."/>
            <person name="Irie R."/>
            <person name="Wakamatsu A."/>
            <person name="Hayashi K."/>
            <person name="Sato H."/>
            <person name="Nagai K."/>
            <person name="Kimura K."/>
            <person name="Makita H."/>
            <person name="Sekine M."/>
            <person name="Obayashi M."/>
            <person name="Nishi T."/>
            <person name="Shibahara T."/>
            <person name="Tanaka T."/>
            <person name="Ishii S."/>
            <person name="Yamamoto J."/>
            <person name="Saito K."/>
            <person name="Kawai Y."/>
            <person name="Isono Y."/>
            <person name="Nakamura Y."/>
            <person name="Nagahari K."/>
            <person name="Murakami K."/>
            <person name="Yasuda T."/>
            <person name="Iwayanagi T."/>
            <person name="Wagatsuma M."/>
            <person name="Shiratori A."/>
            <person name="Sudo H."/>
            <person name="Hosoiri T."/>
            <person name="Kaku Y."/>
            <person name="Kodaira H."/>
            <person name="Kondo H."/>
            <person name="Sugawara M."/>
            <person name="Takahashi M."/>
            <person name="Kanda K."/>
            <person name="Yokoi T."/>
            <person name="Furuya T."/>
            <person name="Kikkawa E."/>
            <person name="Omura Y."/>
            <person name="Abe K."/>
            <person name="Kamihara K."/>
            <person name="Katsuta N."/>
            <person name="Sato K."/>
            <person name="Tanikawa M."/>
            <person name="Yamazaki M."/>
            <person name="Ninomiya K."/>
            <person name="Ishibashi T."/>
            <person name="Yamashita H."/>
            <person name="Murakawa K."/>
            <person name="Fujimori K."/>
            <person name="Tanai H."/>
            <person name="Kimata M."/>
            <person name="Watanabe M."/>
            <person name="Hiraoka S."/>
            <person name="Chiba Y."/>
            <person name="Ishida S."/>
            <person name="Ono Y."/>
            <person name="Takiguchi S."/>
            <person name="Watanabe S."/>
            <person name="Yosida M."/>
            <person name="Hotuta T."/>
            <person name="Kusano J."/>
            <person name="Kanehori K."/>
            <person name="Takahashi-Fujii A."/>
            <person name="Hara H."/>
            <person name="Tanase T.-O."/>
            <person name="Nomura Y."/>
            <person name="Togiya S."/>
            <person name="Komai F."/>
            <person name="Hara R."/>
            <person name="Takeuchi K."/>
            <person name="Arita M."/>
            <person name="Imose N."/>
            <person name="Musashino K."/>
            <person name="Yuuki H."/>
            <person name="Oshima A."/>
            <person name="Sasaki N."/>
            <person name="Aotsuka S."/>
            <person name="Yoshikawa Y."/>
            <person name="Matsunawa H."/>
            <person name="Ichihara T."/>
            <person name="Shiohata N."/>
            <person name="Sano S."/>
            <person name="Moriya S."/>
            <person name="Momiyama H."/>
            <person name="Satoh N."/>
            <person name="Takami S."/>
            <person name="Terashima Y."/>
            <person name="Suzuki O."/>
            <person name="Nakagawa S."/>
            <person name="Senoh A."/>
            <person name="Mizoguchi H."/>
            <person name="Goto Y."/>
            <person name="Shimizu F."/>
            <person name="Wakebe H."/>
            <person name="Hishigaki H."/>
            <person name="Watanabe T."/>
            <person name="Sugiyama A."/>
            <person name="Takemoto M."/>
            <person name="Kawakami B."/>
            <person name="Yamazaki M."/>
            <person name="Watanabe K."/>
            <person name="Kumagai A."/>
            <person name="Itakura S."/>
            <person name="Fukuzumi Y."/>
            <person name="Fujimori Y."/>
            <person name="Komiyama M."/>
            <person name="Tashiro H."/>
            <person name="Tanigami A."/>
            <person name="Fujiwara T."/>
            <person name="Ono T."/>
            <person name="Yamada K."/>
            <person name="Fujii Y."/>
            <person name="Ozaki K."/>
            <person name="Hirao M."/>
            <person name="Ohmori Y."/>
            <person name="Kawabata A."/>
            <person name="Hikiji T."/>
            <person name="Kobatake N."/>
            <person name="Inagaki H."/>
            <person name="Ikema Y."/>
            <person name="Okamoto S."/>
            <person name="Okitani R."/>
            <person name="Kawakami T."/>
            <person name="Noguchi S."/>
            <person name="Itoh T."/>
            <person name="Shigeta K."/>
            <person name="Senba T."/>
            <person name="Matsumura K."/>
            <person name="Nakajima Y."/>
            <person name="Mizuno T."/>
            <person name="Morinaga M."/>
            <person name="Sasaki M."/>
            <person name="Togashi T."/>
            <person name="Oyama M."/>
            <person name="Hata H."/>
            <person name="Watanabe M."/>
            <person name="Komatsu T."/>
            <person name="Mizushima-Sugano J."/>
            <person name="Satoh T."/>
            <person name="Shirai Y."/>
            <person name="Takahashi Y."/>
            <person name="Nakagawa K."/>
            <person name="Okumura K."/>
            <person name="Nagase T."/>
            <person name="Nomura N."/>
            <person name="Kikuchi H."/>
            <person name="Masuho Y."/>
            <person name="Yamashita R."/>
            <person name="Nakai K."/>
            <person name="Yada T."/>
            <person name="Nakamura Y."/>
            <person name="Ohara O."/>
            <person name="Isogai T."/>
            <person name="Sugano S."/>
        </authorList>
    </citation>
    <scope>NUCLEOTIDE SEQUENCE [LARGE SCALE MRNA] OF 472-1059</scope>
    <scope>VARIANTS ASN-793 AND LYS-938</scope>
    <source>
        <tissue>Thalamus</tissue>
    </source>
</reference>
<feature type="chain" id="PRO_0000027867" description="Transmembrane protease serine 9" evidence="2">
    <location>
        <begin position="1"/>
        <end position="1059"/>
    </location>
</feature>
<feature type="chain" id="PRO_0000027868" description="Serase-1" evidence="2">
    <location>
        <begin position="203"/>
        <end position="503"/>
    </location>
</feature>
<feature type="chain" id="PRO_0000027869" description="Serase-2" evidence="2">
    <location>
        <begin position="504"/>
        <end position="826"/>
    </location>
</feature>
<feature type="chain" id="PRO_0000027870" description="Serase-3" evidence="2">
    <location>
        <begin position="827"/>
        <end position="1059"/>
    </location>
</feature>
<feature type="topological domain" description="Cytoplasmic" evidence="2">
    <location>
        <begin position="1"/>
        <end position="29"/>
    </location>
</feature>
<feature type="transmembrane region" description="Helical; Signal-anchor for type II membrane protein" evidence="2">
    <location>
        <begin position="30"/>
        <end position="50"/>
    </location>
</feature>
<feature type="topological domain" description="Extracellular" evidence="2">
    <location>
        <begin position="51"/>
        <end position="1059"/>
    </location>
</feature>
<feature type="domain" description="LDL-receptor class A" evidence="3">
    <location>
        <begin position="153"/>
        <end position="190"/>
    </location>
</feature>
<feature type="domain" description="Peptidase S1 1" evidence="4">
    <location>
        <begin position="203"/>
        <end position="436"/>
    </location>
</feature>
<feature type="domain" description="Peptidase S1 2" evidence="4">
    <location>
        <begin position="504"/>
        <end position="736"/>
    </location>
</feature>
<feature type="domain" description="Peptidase S1 3" evidence="4">
    <location>
        <begin position="827"/>
        <end position="1058"/>
    </location>
</feature>
<feature type="region of interest" description="Disordered" evidence="5">
    <location>
        <begin position="443"/>
        <end position="469"/>
    </location>
</feature>
<feature type="region of interest" description="Disordered" evidence="5">
    <location>
        <begin position="758"/>
        <end position="814"/>
    </location>
</feature>
<feature type="compositionally biased region" description="Polar residues" evidence="5">
    <location>
        <begin position="780"/>
        <end position="798"/>
    </location>
</feature>
<feature type="active site" description="Charge relay system" evidence="1">
    <location>
        <position position="243"/>
    </location>
</feature>
<feature type="active site" description="Charge relay system" evidence="1">
    <location>
        <position position="292"/>
    </location>
</feature>
<feature type="active site" description="Charge relay system" evidence="1">
    <location>
        <position position="387"/>
    </location>
</feature>
<feature type="active site" description="Charge relay system" evidence="1">
    <location>
        <position position="544"/>
    </location>
</feature>
<feature type="active site" description="Charge relay system" evidence="1">
    <location>
        <position position="592"/>
    </location>
</feature>
<feature type="active site" description="Charge relay system" evidence="1">
    <location>
        <position position="687"/>
    </location>
</feature>
<feature type="site" description="Cleavage" evidence="2">
    <location>
        <begin position="202"/>
        <end position="203"/>
    </location>
</feature>
<feature type="site" description="Cleavage" evidence="2">
    <location>
        <begin position="503"/>
        <end position="504"/>
    </location>
</feature>
<feature type="site" description="Cleavage" evidence="2">
    <location>
        <begin position="826"/>
        <end position="827"/>
    </location>
</feature>
<feature type="glycosylation site" description="N-linked (GlcNAc...) asparagine" evidence="2">
    <location>
        <position position="547"/>
    </location>
</feature>
<feature type="glycosylation site" description="N-linked (GlcNAc...) asparagine" evidence="2">
    <location>
        <position position="638"/>
    </location>
</feature>
<feature type="glycosylation site" description="N-linked (GlcNAc...) asparagine" evidence="2">
    <location>
        <position position="663"/>
    </location>
</feature>
<feature type="glycosylation site" description="N-linked (GlcNAc...) asparagine" evidence="2">
    <location>
        <position position="786"/>
    </location>
</feature>
<feature type="disulfide bond" evidence="1">
    <location>
        <begin position="154"/>
        <end position="166"/>
    </location>
</feature>
<feature type="disulfide bond" evidence="1">
    <location>
        <begin position="161"/>
        <end position="180"/>
    </location>
</feature>
<feature type="disulfide bond" evidence="1">
    <location>
        <begin position="174"/>
        <end position="189"/>
    </location>
</feature>
<feature type="disulfide bond" evidence="1">
    <location>
        <begin position="228"/>
        <end position="244"/>
    </location>
</feature>
<feature type="disulfide bond" evidence="1">
    <location>
        <begin position="326"/>
        <end position="393"/>
    </location>
</feature>
<feature type="disulfide bond" evidence="1">
    <location>
        <begin position="358"/>
        <end position="372"/>
    </location>
</feature>
<feature type="disulfide bond" evidence="1">
    <location>
        <begin position="383"/>
        <end position="412"/>
    </location>
</feature>
<feature type="disulfide bond" evidence="1">
    <location>
        <begin position="529"/>
        <end position="545"/>
    </location>
</feature>
<feature type="disulfide bond" evidence="1">
    <location>
        <begin position="626"/>
        <end position="693"/>
    </location>
</feature>
<feature type="disulfide bond" evidence="1">
    <location>
        <begin position="658"/>
        <end position="672"/>
    </location>
</feature>
<feature type="disulfide bond" evidence="1">
    <location>
        <begin position="683"/>
        <end position="712"/>
    </location>
</feature>
<feature type="disulfide bond" evidence="1">
    <location>
        <begin position="853"/>
        <end position="869"/>
    </location>
</feature>
<feature type="disulfide bond" evidence="1">
    <location>
        <begin position="949"/>
        <end position="1015"/>
    </location>
</feature>
<feature type="disulfide bond" evidence="1">
    <location>
        <begin position="980"/>
        <end position="994"/>
    </location>
</feature>
<feature type="disulfide bond" evidence="1">
    <location>
        <begin position="1005"/>
        <end position="1034"/>
    </location>
</feature>
<feature type="sequence variant" id="VAR_051845" description="In dbSNP:rs8100709.">
    <original>T</original>
    <variation>A</variation>
    <location>
        <position position="4"/>
    </location>
</feature>
<feature type="sequence variant" id="VAR_021508" description="In dbSNP:rs891174.">
    <original>S</original>
    <variation>T</variation>
    <location>
        <position position="30"/>
    </location>
</feature>
<feature type="sequence variant" id="VAR_033650" description="In dbSNP:rs17685098.">
    <original>R</original>
    <variation>W</variation>
    <location>
        <position position="73"/>
    </location>
</feature>
<feature type="sequence variant" id="VAR_051846" description="In dbSNP:rs10153474.">
    <original>A</original>
    <variation>T</variation>
    <location>
        <position position="456"/>
    </location>
</feature>
<feature type="sequence variant" id="VAR_061774" description="In dbSNP:rs60568869.">
    <original>S</original>
    <variation>T</variation>
    <location>
        <position position="659"/>
    </location>
</feature>
<feature type="sequence variant" id="VAR_021509" description="In dbSNP:rs735911." evidence="7">
    <original>S</original>
    <variation>N</variation>
    <location>
        <position position="793"/>
    </location>
</feature>
<feature type="sequence variant" id="VAR_021510" description="In dbSNP:rs7247162." evidence="7">
    <original>E</original>
    <variation>K</variation>
    <location>
        <position position="938"/>
    </location>
</feature>
<feature type="sequence conflict" description="In Ref. 3; BAD18439." evidence="8" ref="3">
    <original>T</original>
    <variation>P</variation>
    <location>
        <position position="657"/>
    </location>
</feature>
<feature type="sequence conflict" description="In Ref. 3; BAD18439." evidence="8" ref="3">
    <original>A</original>
    <variation>V</variation>
    <location>
        <position position="899"/>
    </location>
</feature>
<gene>
    <name type="primary">TMPRSS9</name>
</gene>
<dbReference type="EC" id="3.4.21.-"/>
<dbReference type="EMBL" id="AJ488946">
    <property type="protein sequence ID" value="CAD35758.1"/>
    <property type="molecule type" value="mRNA"/>
</dbReference>
<dbReference type="EMBL" id="AJ488947">
    <property type="protein sequence ID" value="CAD35759.1"/>
    <property type="status" value="ALT_SEQ"/>
    <property type="molecule type" value="mRNA"/>
</dbReference>
<dbReference type="EMBL" id="AC011522">
    <property type="status" value="NOT_ANNOTATED_CDS"/>
    <property type="molecule type" value="Genomic_DNA"/>
</dbReference>
<dbReference type="EMBL" id="AC011542">
    <property type="status" value="NOT_ANNOTATED_CDS"/>
    <property type="molecule type" value="Genomic_DNA"/>
</dbReference>
<dbReference type="EMBL" id="AK131261">
    <property type="protein sequence ID" value="BAD18439.1"/>
    <property type="status" value="ALT_FRAME"/>
    <property type="molecule type" value="mRNA"/>
</dbReference>
<dbReference type="CCDS" id="CCDS12088.1"/>
<dbReference type="RefSeq" id="NP_892018.1">
    <property type="nucleotide sequence ID" value="NM_182973.3"/>
</dbReference>
<dbReference type="SMR" id="Q7Z410"/>
<dbReference type="BioGRID" id="131860">
    <property type="interactions" value="10"/>
</dbReference>
<dbReference type="FunCoup" id="Q7Z410">
    <property type="interactions" value="27"/>
</dbReference>
<dbReference type="STRING" id="9606.ENSP00000497651"/>
<dbReference type="MEROPS" id="S01.969"/>
<dbReference type="GlyCosmos" id="Q7Z410">
    <property type="glycosylation" value="4 sites, No reported glycans"/>
</dbReference>
<dbReference type="GlyGen" id="Q7Z410">
    <property type="glycosylation" value="6 sites"/>
</dbReference>
<dbReference type="iPTMnet" id="Q7Z410"/>
<dbReference type="PhosphoSitePlus" id="Q7Z410"/>
<dbReference type="BioMuta" id="TMPRSS9"/>
<dbReference type="DMDM" id="61217609"/>
<dbReference type="MassIVE" id="Q7Z410"/>
<dbReference type="PaxDb" id="9606-ENSP00000330264"/>
<dbReference type="PeptideAtlas" id="Q7Z410"/>
<dbReference type="ProteomicsDB" id="69126"/>
<dbReference type="TopDownProteomics" id="Q7Z410"/>
<dbReference type="Antibodypedia" id="57199">
    <property type="antibodies" value="76 antibodies from 13 providers"/>
</dbReference>
<dbReference type="DNASU" id="360200"/>
<dbReference type="Ensembl" id="ENST00000649857.1">
    <property type="protein sequence ID" value="ENSP00000497651.1"/>
    <property type="gene ID" value="ENSG00000178297.15"/>
</dbReference>
<dbReference type="GeneID" id="360200"/>
<dbReference type="KEGG" id="hsa:360200"/>
<dbReference type="UCSC" id="uc010xgx.3">
    <property type="organism name" value="human"/>
</dbReference>
<dbReference type="AGR" id="HGNC:30079"/>
<dbReference type="CTD" id="360200"/>
<dbReference type="DisGeNET" id="360200"/>
<dbReference type="GeneCards" id="TMPRSS9"/>
<dbReference type="HGNC" id="HGNC:30079">
    <property type="gene designation" value="TMPRSS9"/>
</dbReference>
<dbReference type="HPA" id="ENSG00000178297">
    <property type="expression patterns" value="Group enriched (liver, lymphoid tissue, testis)"/>
</dbReference>
<dbReference type="MIM" id="610477">
    <property type="type" value="gene"/>
</dbReference>
<dbReference type="neXtProt" id="NX_Q7Z410"/>
<dbReference type="OpenTargets" id="ENSG00000178297"/>
<dbReference type="PharmGKB" id="PA134967594"/>
<dbReference type="VEuPathDB" id="HostDB:ENSG00000178297"/>
<dbReference type="eggNOG" id="KOG3627">
    <property type="taxonomic scope" value="Eukaryota"/>
</dbReference>
<dbReference type="GeneTree" id="ENSGT00940000159993"/>
<dbReference type="HOGENOM" id="CLU_004497_2_0_1"/>
<dbReference type="InParanoid" id="Q7Z410"/>
<dbReference type="OrthoDB" id="10059102at2759"/>
<dbReference type="PAN-GO" id="Q7Z410">
    <property type="GO annotations" value="0 GO annotations based on evolutionary models"/>
</dbReference>
<dbReference type="PhylomeDB" id="Q7Z410"/>
<dbReference type="TreeFam" id="TF330647"/>
<dbReference type="PathwayCommons" id="Q7Z410"/>
<dbReference type="BioGRID-ORCS" id="360200">
    <property type="hits" value="17 hits in 1141 CRISPR screens"/>
</dbReference>
<dbReference type="ChiTaRS" id="TMPRSS9">
    <property type="organism name" value="human"/>
</dbReference>
<dbReference type="GenomeRNAi" id="360200"/>
<dbReference type="Pharos" id="Q7Z410">
    <property type="development level" value="Tbio"/>
</dbReference>
<dbReference type="PRO" id="PR:Q7Z410"/>
<dbReference type="Proteomes" id="UP000005640">
    <property type="component" value="Chromosome 19"/>
</dbReference>
<dbReference type="RNAct" id="Q7Z410">
    <property type="molecule type" value="protein"/>
</dbReference>
<dbReference type="Bgee" id="ENSG00000178297">
    <property type="expression patterns" value="Expressed in right lobe of liver and 100 other cell types or tissues"/>
</dbReference>
<dbReference type="ExpressionAtlas" id="Q7Z410">
    <property type="expression patterns" value="baseline and differential"/>
</dbReference>
<dbReference type="GO" id="GO:0005886">
    <property type="term" value="C:plasma membrane"/>
    <property type="evidence" value="ECO:0007669"/>
    <property type="project" value="UniProtKB-SubCell"/>
</dbReference>
<dbReference type="GO" id="GO:0004252">
    <property type="term" value="F:serine-type endopeptidase activity"/>
    <property type="evidence" value="ECO:0007669"/>
    <property type="project" value="InterPro"/>
</dbReference>
<dbReference type="GO" id="GO:0006508">
    <property type="term" value="P:proteolysis"/>
    <property type="evidence" value="ECO:0007669"/>
    <property type="project" value="UniProtKB-KW"/>
</dbReference>
<dbReference type="CDD" id="cd00112">
    <property type="entry name" value="LDLa"/>
    <property type="match status" value="1"/>
</dbReference>
<dbReference type="CDD" id="cd00190">
    <property type="entry name" value="Tryp_SPc"/>
    <property type="match status" value="3"/>
</dbReference>
<dbReference type="FunFam" id="2.40.10.10:FF:000003">
    <property type="entry name" value="Transmembrane serine protease 3"/>
    <property type="match status" value="3"/>
</dbReference>
<dbReference type="Gene3D" id="4.10.400.10">
    <property type="entry name" value="Low-density Lipoprotein Receptor"/>
    <property type="match status" value="1"/>
</dbReference>
<dbReference type="Gene3D" id="2.40.10.10">
    <property type="entry name" value="Trypsin-like serine proteases"/>
    <property type="match status" value="4"/>
</dbReference>
<dbReference type="InterPro" id="IPR036055">
    <property type="entry name" value="LDL_receptor-like_sf"/>
</dbReference>
<dbReference type="InterPro" id="IPR002172">
    <property type="entry name" value="LDrepeatLR_classA_rpt"/>
</dbReference>
<dbReference type="InterPro" id="IPR009003">
    <property type="entry name" value="Peptidase_S1_PA"/>
</dbReference>
<dbReference type="InterPro" id="IPR043504">
    <property type="entry name" value="Peptidase_S1_PA_chymotrypsin"/>
</dbReference>
<dbReference type="InterPro" id="IPR001314">
    <property type="entry name" value="Peptidase_S1A"/>
</dbReference>
<dbReference type="InterPro" id="IPR017324">
    <property type="entry name" value="Tmprss9"/>
</dbReference>
<dbReference type="InterPro" id="IPR001254">
    <property type="entry name" value="Trypsin_dom"/>
</dbReference>
<dbReference type="InterPro" id="IPR018114">
    <property type="entry name" value="TRYPSIN_HIS"/>
</dbReference>
<dbReference type="InterPro" id="IPR033116">
    <property type="entry name" value="TRYPSIN_SER"/>
</dbReference>
<dbReference type="PANTHER" id="PTHR24252">
    <property type="entry name" value="ACROSIN-RELATED"/>
    <property type="match status" value="1"/>
</dbReference>
<dbReference type="PANTHER" id="PTHR24252:SF26">
    <property type="entry name" value="TRANSMEMBRANE SERINE PROTEASE 9"/>
    <property type="match status" value="1"/>
</dbReference>
<dbReference type="Pfam" id="PF00057">
    <property type="entry name" value="Ldl_recept_a"/>
    <property type="match status" value="1"/>
</dbReference>
<dbReference type="Pfam" id="PF00089">
    <property type="entry name" value="Trypsin"/>
    <property type="match status" value="3"/>
</dbReference>
<dbReference type="PIRSF" id="PIRSF037931">
    <property type="entry name" value="TMPRSS9_polyserase-1"/>
    <property type="match status" value="1"/>
</dbReference>
<dbReference type="PRINTS" id="PR00722">
    <property type="entry name" value="CHYMOTRYPSIN"/>
</dbReference>
<dbReference type="SMART" id="SM00192">
    <property type="entry name" value="LDLa"/>
    <property type="match status" value="1"/>
</dbReference>
<dbReference type="SMART" id="SM00020">
    <property type="entry name" value="Tryp_SPc"/>
    <property type="match status" value="3"/>
</dbReference>
<dbReference type="SUPFAM" id="SSF57424">
    <property type="entry name" value="LDL receptor-like module"/>
    <property type="match status" value="1"/>
</dbReference>
<dbReference type="SUPFAM" id="SSF50494">
    <property type="entry name" value="Trypsin-like serine proteases"/>
    <property type="match status" value="3"/>
</dbReference>
<dbReference type="PROSITE" id="PS01209">
    <property type="entry name" value="LDLRA_1"/>
    <property type="match status" value="1"/>
</dbReference>
<dbReference type="PROSITE" id="PS50068">
    <property type="entry name" value="LDLRA_2"/>
    <property type="match status" value="1"/>
</dbReference>
<dbReference type="PROSITE" id="PS50240">
    <property type="entry name" value="TRYPSIN_DOM"/>
    <property type="match status" value="3"/>
</dbReference>
<dbReference type="PROSITE" id="PS00134">
    <property type="entry name" value="TRYPSIN_HIS"/>
    <property type="match status" value="3"/>
</dbReference>
<dbReference type="PROSITE" id="PS00135">
    <property type="entry name" value="TRYPSIN_SER"/>
    <property type="match status" value="2"/>
</dbReference>
<proteinExistence type="evidence at protein level"/>